<sequence length="156" mass="17983">MPRKGPVAKRDVLPDPMYNSKLVTRLINKMMVDGKKGKSQTILYNAFDIVRERTGKEPMEVFEQALKNIMPVLEVRARRVGGANYQVPVEVRPERRTTLGLRWLVNYARLRGEKTMEERLANEILDAANNTGASVKKREDTHKMAEANKAFAHYRW</sequence>
<evidence type="ECO:0000255" key="1">
    <source>
        <dbReference type="HAMAP-Rule" id="MF_00480"/>
    </source>
</evidence>
<evidence type="ECO:0000305" key="2"/>
<comment type="function">
    <text evidence="1">One of the primary rRNA binding proteins, it binds directly to 16S rRNA where it nucleates assembly of the head domain of the 30S subunit. Is located at the subunit interface close to the decoding center, probably blocks exit of the E-site tRNA.</text>
</comment>
<comment type="subunit">
    <text evidence="1">Part of the 30S ribosomal subunit. Contacts proteins S9 and S11.</text>
</comment>
<comment type="similarity">
    <text evidence="1">Belongs to the universal ribosomal protein uS7 family.</text>
</comment>
<dbReference type="EMBL" id="CP000764">
    <property type="protein sequence ID" value="ABS20474.1"/>
    <property type="molecule type" value="Genomic_DNA"/>
</dbReference>
<dbReference type="RefSeq" id="WP_011983242.1">
    <property type="nucleotide sequence ID" value="NC_009674.1"/>
</dbReference>
<dbReference type="SMR" id="A7GK16"/>
<dbReference type="STRING" id="315749.Bcer98_0100"/>
<dbReference type="GeneID" id="33895421"/>
<dbReference type="KEGG" id="bcy:Bcer98_0100"/>
<dbReference type="eggNOG" id="COG0049">
    <property type="taxonomic scope" value="Bacteria"/>
</dbReference>
<dbReference type="HOGENOM" id="CLU_072226_1_1_9"/>
<dbReference type="OrthoDB" id="9807653at2"/>
<dbReference type="Proteomes" id="UP000002300">
    <property type="component" value="Chromosome"/>
</dbReference>
<dbReference type="GO" id="GO:0015935">
    <property type="term" value="C:small ribosomal subunit"/>
    <property type="evidence" value="ECO:0007669"/>
    <property type="project" value="InterPro"/>
</dbReference>
<dbReference type="GO" id="GO:0019843">
    <property type="term" value="F:rRNA binding"/>
    <property type="evidence" value="ECO:0007669"/>
    <property type="project" value="UniProtKB-UniRule"/>
</dbReference>
<dbReference type="GO" id="GO:0003735">
    <property type="term" value="F:structural constituent of ribosome"/>
    <property type="evidence" value="ECO:0007669"/>
    <property type="project" value="InterPro"/>
</dbReference>
<dbReference type="GO" id="GO:0000049">
    <property type="term" value="F:tRNA binding"/>
    <property type="evidence" value="ECO:0007669"/>
    <property type="project" value="UniProtKB-UniRule"/>
</dbReference>
<dbReference type="GO" id="GO:0006412">
    <property type="term" value="P:translation"/>
    <property type="evidence" value="ECO:0007669"/>
    <property type="project" value="UniProtKB-UniRule"/>
</dbReference>
<dbReference type="CDD" id="cd14869">
    <property type="entry name" value="uS7_Bacteria"/>
    <property type="match status" value="1"/>
</dbReference>
<dbReference type="FunFam" id="1.10.455.10:FF:000001">
    <property type="entry name" value="30S ribosomal protein S7"/>
    <property type="match status" value="1"/>
</dbReference>
<dbReference type="Gene3D" id="1.10.455.10">
    <property type="entry name" value="Ribosomal protein S7 domain"/>
    <property type="match status" value="1"/>
</dbReference>
<dbReference type="HAMAP" id="MF_00480_B">
    <property type="entry name" value="Ribosomal_uS7_B"/>
    <property type="match status" value="1"/>
</dbReference>
<dbReference type="InterPro" id="IPR000235">
    <property type="entry name" value="Ribosomal_uS7"/>
</dbReference>
<dbReference type="InterPro" id="IPR005717">
    <property type="entry name" value="Ribosomal_uS7_bac/org-type"/>
</dbReference>
<dbReference type="InterPro" id="IPR020606">
    <property type="entry name" value="Ribosomal_uS7_CS"/>
</dbReference>
<dbReference type="InterPro" id="IPR023798">
    <property type="entry name" value="Ribosomal_uS7_dom"/>
</dbReference>
<dbReference type="InterPro" id="IPR036823">
    <property type="entry name" value="Ribosomal_uS7_dom_sf"/>
</dbReference>
<dbReference type="NCBIfam" id="TIGR01029">
    <property type="entry name" value="rpsG_bact"/>
    <property type="match status" value="1"/>
</dbReference>
<dbReference type="PANTHER" id="PTHR11205">
    <property type="entry name" value="RIBOSOMAL PROTEIN S7"/>
    <property type="match status" value="1"/>
</dbReference>
<dbReference type="Pfam" id="PF00177">
    <property type="entry name" value="Ribosomal_S7"/>
    <property type="match status" value="1"/>
</dbReference>
<dbReference type="PIRSF" id="PIRSF002122">
    <property type="entry name" value="RPS7p_RPS7a_RPS5e_RPS7o"/>
    <property type="match status" value="1"/>
</dbReference>
<dbReference type="SUPFAM" id="SSF47973">
    <property type="entry name" value="Ribosomal protein S7"/>
    <property type="match status" value="1"/>
</dbReference>
<dbReference type="PROSITE" id="PS00052">
    <property type="entry name" value="RIBOSOMAL_S7"/>
    <property type="match status" value="1"/>
</dbReference>
<feature type="chain" id="PRO_1000081269" description="Small ribosomal subunit protein uS7">
    <location>
        <begin position="1"/>
        <end position="156"/>
    </location>
</feature>
<gene>
    <name evidence="1" type="primary">rpsG</name>
    <name type="ordered locus">Bcer98_0100</name>
</gene>
<accession>A7GK16</accession>
<proteinExistence type="inferred from homology"/>
<name>RS7_BACCN</name>
<reference key="1">
    <citation type="journal article" date="2008" name="Chem. Biol. Interact.">
        <title>Extending the Bacillus cereus group genomics to putative food-borne pathogens of different toxicity.</title>
        <authorList>
            <person name="Lapidus A."/>
            <person name="Goltsman E."/>
            <person name="Auger S."/>
            <person name="Galleron N."/>
            <person name="Segurens B."/>
            <person name="Dossat C."/>
            <person name="Land M.L."/>
            <person name="Broussolle V."/>
            <person name="Brillard J."/>
            <person name="Guinebretiere M.-H."/>
            <person name="Sanchis V."/>
            <person name="Nguen-the C."/>
            <person name="Lereclus D."/>
            <person name="Richardson P."/>
            <person name="Wincker P."/>
            <person name="Weissenbach J."/>
            <person name="Ehrlich S.D."/>
            <person name="Sorokin A."/>
        </authorList>
    </citation>
    <scope>NUCLEOTIDE SEQUENCE [LARGE SCALE GENOMIC DNA]</scope>
    <source>
        <strain>DSM 22905 / CIP 110041 / 391-98 / NVH 391-98</strain>
    </source>
</reference>
<protein>
    <recommendedName>
        <fullName evidence="1">Small ribosomal subunit protein uS7</fullName>
    </recommendedName>
    <alternativeName>
        <fullName evidence="2">30S ribosomal protein S7</fullName>
    </alternativeName>
</protein>
<organism>
    <name type="scientific">Bacillus cytotoxicus (strain DSM 22905 / CIP 110041 / 391-98 / NVH 391-98)</name>
    <dbReference type="NCBI Taxonomy" id="315749"/>
    <lineage>
        <taxon>Bacteria</taxon>
        <taxon>Bacillati</taxon>
        <taxon>Bacillota</taxon>
        <taxon>Bacilli</taxon>
        <taxon>Bacillales</taxon>
        <taxon>Bacillaceae</taxon>
        <taxon>Bacillus</taxon>
        <taxon>Bacillus cereus group</taxon>
    </lineage>
</organism>
<keyword id="KW-0687">Ribonucleoprotein</keyword>
<keyword id="KW-0689">Ribosomal protein</keyword>
<keyword id="KW-0694">RNA-binding</keyword>
<keyword id="KW-0699">rRNA-binding</keyword>
<keyword id="KW-0820">tRNA-binding</keyword>